<comment type="function">
    <text evidence="1">DNA deaminase (cytidine deaminase) which acts as an inhibitor of retrovirus replication and retrotransposon mobility. After the penetration of retroviral nucleocapsids into target cells of infection and the initiation of reverse transcription, it can induce the conversion of cytosine to uracil in the minus-sense single-strand viral DNA, leading to G-to-A hypermutations in the subsequent plus-strand viral DNA. The resultant detrimental levels of mutations in the proviral genome, along with a deamination-independent mechanism that works prior to the proviral integration, together exert efficient antiretroviral effects in infected target cells. Selectively targets single-stranded DNA and does not deaminate double-stranded DNA or single- or double-stranded RNA (By similarity).</text>
</comment>
<comment type="catalytic activity">
    <reaction evidence="1">
        <text>a 2'-deoxycytidine in single-stranded DNA + H2O + H(+) = a 2'-deoxyuridine in single-stranded DNA + NH4(+)</text>
        <dbReference type="Rhea" id="RHEA:50948"/>
        <dbReference type="Rhea" id="RHEA-COMP:12846"/>
        <dbReference type="Rhea" id="RHEA-COMP:12847"/>
        <dbReference type="ChEBI" id="CHEBI:15377"/>
        <dbReference type="ChEBI" id="CHEBI:15378"/>
        <dbReference type="ChEBI" id="CHEBI:28938"/>
        <dbReference type="ChEBI" id="CHEBI:85452"/>
        <dbReference type="ChEBI" id="CHEBI:133902"/>
        <dbReference type="EC" id="3.5.4.38"/>
    </reaction>
</comment>
<comment type="cofactor">
    <cofactor evidence="1">
        <name>Zn(2+)</name>
        <dbReference type="ChEBI" id="CHEBI:29105"/>
    </cofactor>
</comment>
<comment type="subunit">
    <text evidence="1">Homodimer. Homooligomer. Can bind RNA to form ribonucleoprotein complexes of high-molecular-mass (HMM) or low-molecular-mass (LMM). HMM is inactive and heterogeneous in protein composition because of binding nonselectively to cellular RNAs, which in turn are associated with variety of cellular proteins. The LMM form which is enzymatically active has few or no RNAs associated. Its ability to form homooligomer is distinct from its ability to assemble into HMM. Interacts with APOBEC3B, APOBEC3F, MOV10, AGO2, EIF4E, EIF4ENIF1, DCP2 and DDX6 in an RNA-dependent manner. Interacts with AGO1, AGO3 and PKA/PRKACA (By similarity).</text>
</comment>
<comment type="subcellular location">
    <subcellularLocation>
        <location evidence="1">Cytoplasm</location>
    </subcellularLocation>
    <subcellularLocation>
        <location evidence="1">Nucleus</location>
    </subcellularLocation>
    <subcellularLocation>
        <location evidence="1">Cytoplasm</location>
        <location evidence="1">P-body</location>
    </subcellularLocation>
    <text evidence="1">Mainly cytoplasmic, small amount are found in the nucleus.</text>
</comment>
<comment type="domain">
    <text evidence="1">The CMP/dCMP deaminase domain 1 mediates RNA binding, RNA-dependent oligomerization and virion incorporation whereas the CMP/dCMP deaminase domain 2 confers deoxycytidine deaminase activity and substrate sequence specificity.</text>
</comment>
<comment type="similarity">
    <text evidence="3">Belongs to the cytidine and deoxycytidylate deaminase family.</text>
</comment>
<sequence>MKPHFRNTVERMYRGTFFYNFNNRPILSRRNTVWLCYEVKTRGPSMPTWGAKIFRGQLYPEAKDHPEMKFLHWFRKWRQLHRDQEYEVTWYVSWSPCTRCANSVATFLAEDPKVTLTIFVARLYYFWKPDYQEALRILCQKRGGPHATMKIMNYNEFQHCWNEFVDGQGKPFKPRKNLPKHYTLLHATLGELLRHVMDPGTFTSNFNNKPWVSGQRETYLCYKVERSHNDTWVLLNQHRGFLRNQAPDRHGFPKGRHAELCFLDLIPFWKLDDQQYRVTCFTSWSPCFSCAQKMAKFISKKKHVSLCIFAARIYDDQGRRQEGLRTLHRDGAKIAVMXYSEFKHCWDTFVDHQGRPFQPWDGLDEHSQALSGRLRAILQNQGN</sequence>
<dbReference type="EC" id="3.5.4.38" evidence="1"/>
<dbReference type="EMBL" id="AY622521">
    <property type="protein sequence ID" value="AAT44390.1"/>
    <property type="molecule type" value="Genomic_DNA"/>
</dbReference>
<dbReference type="EMBL" id="AY622514">
    <property type="protein sequence ID" value="AAT44390.1"/>
    <property type="status" value="JOINED"/>
    <property type="molecule type" value="Genomic_DNA"/>
</dbReference>
<dbReference type="EMBL" id="AY622515">
    <property type="protein sequence ID" value="AAT44390.1"/>
    <property type="status" value="JOINED"/>
    <property type="molecule type" value="Genomic_DNA"/>
</dbReference>
<dbReference type="EMBL" id="AY622516">
    <property type="protein sequence ID" value="AAT44390.1"/>
    <property type="status" value="JOINED"/>
    <property type="molecule type" value="Genomic_DNA"/>
</dbReference>
<dbReference type="EMBL" id="AY622517">
    <property type="protein sequence ID" value="AAT44390.1"/>
    <property type="status" value="JOINED"/>
    <property type="molecule type" value="Genomic_DNA"/>
</dbReference>
<dbReference type="EMBL" id="AY622518">
    <property type="protein sequence ID" value="AAT44390.1"/>
    <property type="status" value="JOINED"/>
    <property type="molecule type" value="Genomic_DNA"/>
</dbReference>
<dbReference type="EMBL" id="AY622519">
    <property type="protein sequence ID" value="AAT44390.1"/>
    <property type="status" value="JOINED"/>
    <property type="molecule type" value="Genomic_DNA"/>
</dbReference>
<dbReference type="EMBL" id="AY622520">
    <property type="protein sequence ID" value="AAT44390.1"/>
    <property type="status" value="JOINED"/>
    <property type="molecule type" value="Genomic_DNA"/>
</dbReference>
<dbReference type="GO" id="GO:0005737">
    <property type="term" value="C:cytoplasm"/>
    <property type="evidence" value="ECO:0000250"/>
    <property type="project" value="UniProtKB"/>
</dbReference>
<dbReference type="GO" id="GO:0005634">
    <property type="term" value="C:nucleus"/>
    <property type="evidence" value="ECO:0007669"/>
    <property type="project" value="UniProtKB-SubCell"/>
</dbReference>
<dbReference type="GO" id="GO:0000932">
    <property type="term" value="C:P-body"/>
    <property type="evidence" value="ECO:0000250"/>
    <property type="project" value="UniProtKB"/>
</dbReference>
<dbReference type="GO" id="GO:1990904">
    <property type="term" value="C:ribonucleoprotein complex"/>
    <property type="evidence" value="ECO:0000250"/>
    <property type="project" value="UniProtKB"/>
</dbReference>
<dbReference type="GO" id="GO:0004126">
    <property type="term" value="F:cytidine deaminase activity"/>
    <property type="evidence" value="ECO:0000250"/>
    <property type="project" value="UniProtKB"/>
</dbReference>
<dbReference type="GO" id="GO:0003723">
    <property type="term" value="F:RNA binding"/>
    <property type="evidence" value="ECO:0007669"/>
    <property type="project" value="TreeGrafter"/>
</dbReference>
<dbReference type="GO" id="GO:0008270">
    <property type="term" value="F:zinc ion binding"/>
    <property type="evidence" value="ECO:0007669"/>
    <property type="project" value="InterPro"/>
</dbReference>
<dbReference type="GO" id="GO:0009972">
    <property type="term" value="P:cytidine deamination"/>
    <property type="evidence" value="ECO:0000250"/>
    <property type="project" value="UniProtKB"/>
</dbReference>
<dbReference type="GO" id="GO:0016554">
    <property type="term" value="P:cytidine to uridine editing"/>
    <property type="evidence" value="ECO:0007669"/>
    <property type="project" value="TreeGrafter"/>
</dbReference>
<dbReference type="GO" id="GO:0051607">
    <property type="term" value="P:defense response to virus"/>
    <property type="evidence" value="ECO:0000250"/>
    <property type="project" value="UniProtKB"/>
</dbReference>
<dbReference type="GO" id="GO:0070383">
    <property type="term" value="P:DNA cytosine deamination"/>
    <property type="evidence" value="ECO:0007669"/>
    <property type="project" value="TreeGrafter"/>
</dbReference>
<dbReference type="GO" id="GO:0045087">
    <property type="term" value="P:innate immune response"/>
    <property type="evidence" value="ECO:0007669"/>
    <property type="project" value="UniProtKB-KW"/>
</dbReference>
<dbReference type="GO" id="GO:0045869">
    <property type="term" value="P:negative regulation of single stranded viral RNA replication via double stranded DNA intermediate"/>
    <property type="evidence" value="ECO:0007669"/>
    <property type="project" value="TreeGrafter"/>
</dbReference>
<dbReference type="GO" id="GO:0010526">
    <property type="term" value="P:transposable element silencing"/>
    <property type="evidence" value="ECO:0000250"/>
    <property type="project" value="UniProtKB"/>
</dbReference>
<dbReference type="CDD" id="cd01283">
    <property type="entry name" value="cytidine_deaminase"/>
    <property type="match status" value="2"/>
</dbReference>
<dbReference type="FunFam" id="3.40.140.10:FF:000029">
    <property type="entry name" value="DNA dC-&gt;dU-editing enzyme APOBEC-3G"/>
    <property type="match status" value="2"/>
</dbReference>
<dbReference type="Gene3D" id="3.40.140.10">
    <property type="entry name" value="Cytidine Deaminase, domain 2"/>
    <property type="match status" value="2"/>
</dbReference>
<dbReference type="InterPro" id="IPR016192">
    <property type="entry name" value="APOBEC/CMP_deaminase_Zn-bd"/>
</dbReference>
<dbReference type="InterPro" id="IPR050610">
    <property type="entry name" value="APOBEC_Cyt_Deaminase"/>
</dbReference>
<dbReference type="InterPro" id="IPR002125">
    <property type="entry name" value="CMP_dCMP_dom"/>
</dbReference>
<dbReference type="InterPro" id="IPR016193">
    <property type="entry name" value="Cytidine_deaminase-like"/>
</dbReference>
<dbReference type="PANTHER" id="PTHR13857:SF20">
    <property type="entry name" value="DNA DC-DU-EDITING ENZYME APOBEC-3G"/>
    <property type="match status" value="1"/>
</dbReference>
<dbReference type="PANTHER" id="PTHR13857">
    <property type="entry name" value="MRNA EDITING ENZYME"/>
    <property type="match status" value="1"/>
</dbReference>
<dbReference type="Pfam" id="PF18782">
    <property type="entry name" value="NAD2"/>
    <property type="match status" value="2"/>
</dbReference>
<dbReference type="SUPFAM" id="SSF53927">
    <property type="entry name" value="Cytidine deaminase-like"/>
    <property type="match status" value="2"/>
</dbReference>
<dbReference type="PROSITE" id="PS00903">
    <property type="entry name" value="CYT_DCMP_DEAMINASES_1"/>
    <property type="match status" value="1"/>
</dbReference>
<dbReference type="PROSITE" id="PS51747">
    <property type="entry name" value="CYT_DCMP_DEAMINASES_2"/>
    <property type="match status" value="2"/>
</dbReference>
<organism>
    <name type="scientific">Erythrocebus patas</name>
    <name type="common">Red guenon</name>
    <name type="synonym">Cercopithecus patas</name>
    <dbReference type="NCBI Taxonomy" id="9538"/>
    <lineage>
        <taxon>Eukaryota</taxon>
        <taxon>Metazoa</taxon>
        <taxon>Chordata</taxon>
        <taxon>Craniata</taxon>
        <taxon>Vertebrata</taxon>
        <taxon>Euteleostomi</taxon>
        <taxon>Mammalia</taxon>
        <taxon>Eutheria</taxon>
        <taxon>Euarchontoglires</taxon>
        <taxon>Primates</taxon>
        <taxon>Haplorrhini</taxon>
        <taxon>Catarrhini</taxon>
        <taxon>Cercopithecidae</taxon>
        <taxon>Cercopithecinae</taxon>
        <taxon>Erythrocebus</taxon>
    </lineage>
</organism>
<keyword id="KW-0051">Antiviral defense</keyword>
<keyword id="KW-0963">Cytoplasm</keyword>
<keyword id="KW-0378">Hydrolase</keyword>
<keyword id="KW-0391">Immunity</keyword>
<keyword id="KW-0399">Innate immunity</keyword>
<keyword id="KW-0479">Metal-binding</keyword>
<keyword id="KW-0539">Nucleus</keyword>
<keyword id="KW-0597">Phosphoprotein</keyword>
<keyword id="KW-0677">Repeat</keyword>
<keyword id="KW-0862">Zinc</keyword>
<gene>
    <name type="primary">APOBEC3G</name>
</gene>
<proteinExistence type="inferred from homology"/>
<protein>
    <recommendedName>
        <fullName evidence="1">DNA dC-&gt;dU-editing enzyme APOBEC-3G</fullName>
        <ecNumber evidence="1">3.5.4.38</ecNumber>
    </recommendedName>
    <alternativeName>
        <fullName>Deoxycytidine deaminase</fullName>
    </alternativeName>
</protein>
<name>ABC3G_ERYPA</name>
<feature type="chain" id="PRO_0000171759" description="DNA dC-&gt;dU-editing enzyme APOBEC-3G">
    <location>
        <begin position="1"/>
        <end position="383"/>
    </location>
</feature>
<feature type="domain" description="CMP/dCMP-type deaminase 1" evidence="2">
    <location>
        <begin position="29"/>
        <end position="138"/>
    </location>
</feature>
<feature type="domain" description="CMP/dCMP-type deaminase 2" evidence="2">
    <location>
        <begin position="214"/>
        <end position="327"/>
    </location>
</feature>
<feature type="region of interest" description="Essential for cytoplasmic localization" evidence="3">
    <location>
        <begin position="1"/>
        <end position="60"/>
    </location>
</feature>
<feature type="region of interest" description="Necessary for homooligomerization" evidence="3">
    <location>
        <begin position="209"/>
        <end position="335"/>
    </location>
</feature>
<feature type="region of interest" description="Interaction with DNA" evidence="3">
    <location>
        <begin position="213"/>
        <end position="215"/>
    </location>
</feature>
<feature type="region of interest" description="Interaction with DNA" evidence="3">
    <location>
        <begin position="312"/>
        <end position="319"/>
    </location>
</feature>
<feature type="active site" description="Proton donor" evidence="2">
    <location>
        <position position="259"/>
    </location>
</feature>
<feature type="binding site" evidence="2">
    <location>
        <position position="65"/>
    </location>
    <ligand>
        <name>Zn(2+)</name>
        <dbReference type="ChEBI" id="CHEBI:29105"/>
        <label>1</label>
    </ligand>
</feature>
<feature type="binding site" evidence="2">
    <location>
        <position position="97"/>
    </location>
    <ligand>
        <name>Zn(2+)</name>
        <dbReference type="ChEBI" id="CHEBI:29105"/>
        <label>1</label>
    </ligand>
</feature>
<feature type="binding site" evidence="2">
    <location>
        <position position="100"/>
    </location>
    <ligand>
        <name>Zn(2+)</name>
        <dbReference type="ChEBI" id="CHEBI:29105"/>
        <label>1</label>
    </ligand>
</feature>
<feature type="binding site" evidence="1">
    <location>
        <position position="257"/>
    </location>
    <ligand>
        <name>Zn(2+)</name>
        <dbReference type="ChEBI" id="CHEBI:29105"/>
        <label>2</label>
        <note>catalytic</note>
    </ligand>
</feature>
<feature type="binding site" evidence="1">
    <location>
        <position position="287"/>
    </location>
    <ligand>
        <name>Zn(2+)</name>
        <dbReference type="ChEBI" id="CHEBI:29105"/>
        <label>2</label>
        <note>catalytic</note>
    </ligand>
</feature>
<feature type="binding site" evidence="1">
    <location>
        <position position="290"/>
    </location>
    <ligand>
        <name>Zn(2+)</name>
        <dbReference type="ChEBI" id="CHEBI:29105"/>
        <label>2</label>
        <note>catalytic</note>
    </ligand>
</feature>
<feature type="site" description="Interaction with DNA" evidence="3">
    <location>
        <position position="244"/>
    </location>
</feature>
<feature type="modified residue" description="Phosphothreonine; by PKA" evidence="1">
    <location>
        <position position="32"/>
    </location>
</feature>
<feature type="modified residue" description="Phosphothreonine; by PKA and CAMK2" evidence="1">
    <location>
        <position position="218"/>
    </location>
</feature>
<accession>Q694C5</accession>
<evidence type="ECO:0000250" key="1">
    <source>
        <dbReference type="UniProtKB" id="Q9HC16"/>
    </source>
</evidence>
<evidence type="ECO:0000255" key="2">
    <source>
        <dbReference type="PROSITE-ProRule" id="PRU01083"/>
    </source>
</evidence>
<evidence type="ECO:0000305" key="3"/>
<reference key="1">
    <citation type="journal article" date="2004" name="PLoS Biol.">
        <title>Ancient adaptive evolution of the primate antiviral DNA-editing enzyme APOBEC3G.</title>
        <authorList>
            <person name="Sawyer S.L."/>
            <person name="Emerman M."/>
            <person name="Malik H.S."/>
        </authorList>
    </citation>
    <scope>NUCLEOTIDE SEQUENCE [GENOMIC DNA]</scope>
</reference>